<name>HXK2_ARATH</name>
<sequence>MGKVAVATTVVCSVAVCAAAALIVRRRMKSAGKWARVIEILKAFEEDCATPIAKLRQVADAMTVEMHAGLASEGGSKLKMLISYVDNLPSGDETGFFYALDLGGTNFRVMRVLLGGKHDRVVKREFKEESIPPHLMTGKSHELFDFIVDVLAKFVATEGEDFHLPPGRQRELGFTFSFPVKQLSLSSGTLINWTKGFSIDDTVDKDVVGELVKAMERVGLDMLVAALVNDTIGTLAGGRYTNPDVVVAVILGTGTNAAYVERAHAIPKWHGLLPKSGEMVINMEWGNFRSSHLPLTEYDHSLDVDSLNPGEQILEKIISGMYLGEILRRVLLKMAEEAAFFGDIVPPKLKIPFIIRTPNMSAMHSDTSPDLKVVGSKLKDILEVQTSSLKMRKVVISLCNIIASRGARLSAAGIYGILKKIGRDATKDGEAQKSVIAMDGGLFEHYTQFSESMKSSLKELLGDEVSESVEVILSNDGSGVGAALLAASHSQYLELEDDSETS</sequence>
<proteinExistence type="evidence at protein level"/>
<protein>
    <recommendedName>
        <fullName>Hexokinase-2</fullName>
        <ecNumber evidence="9">2.7.1.1</ecNumber>
    </recommendedName>
</protein>
<dbReference type="EC" id="2.7.1.1" evidence="9"/>
<dbReference type="EMBL" id="U28215">
    <property type="protein sequence ID" value="AAB49911.1"/>
    <property type="molecule type" value="mRNA"/>
</dbReference>
<dbReference type="EMBL" id="AC005169">
    <property type="protein sequence ID" value="AAC62130.1"/>
    <property type="molecule type" value="Genomic_DNA"/>
</dbReference>
<dbReference type="EMBL" id="CP002685">
    <property type="protein sequence ID" value="AEC06934.1"/>
    <property type="molecule type" value="Genomic_DNA"/>
</dbReference>
<dbReference type="EMBL" id="BT003152">
    <property type="protein sequence ID" value="AAO24584.1"/>
    <property type="molecule type" value="mRNA"/>
</dbReference>
<dbReference type="EMBL" id="AK227668">
    <property type="protein sequence ID" value="BAE99655.1"/>
    <property type="molecule type" value="mRNA"/>
</dbReference>
<dbReference type="PIR" id="A84582">
    <property type="entry name" value="A84582"/>
</dbReference>
<dbReference type="RefSeq" id="NP_179576.1">
    <molecule id="P93834-1"/>
    <property type="nucleotide sequence ID" value="NM_127544.3"/>
</dbReference>
<dbReference type="SMR" id="P93834"/>
<dbReference type="FunCoup" id="P93834">
    <property type="interactions" value="2244"/>
</dbReference>
<dbReference type="STRING" id="3702.P93834"/>
<dbReference type="PaxDb" id="3702-AT2G19860.1"/>
<dbReference type="ProteomicsDB" id="228878">
    <molecule id="P93834-1"/>
</dbReference>
<dbReference type="EnsemblPlants" id="AT2G19860.1">
    <molecule id="P93834-1"/>
    <property type="protein sequence ID" value="AT2G19860.1"/>
    <property type="gene ID" value="AT2G19860"/>
</dbReference>
<dbReference type="GeneID" id="816505"/>
<dbReference type="Gramene" id="AT2G19860.1">
    <molecule id="P93834-1"/>
    <property type="protein sequence ID" value="AT2G19860.1"/>
    <property type="gene ID" value="AT2G19860"/>
</dbReference>
<dbReference type="KEGG" id="ath:AT2G19860"/>
<dbReference type="Araport" id="AT2G19860"/>
<dbReference type="TAIR" id="AT2G19860">
    <property type="gene designation" value="HXK2"/>
</dbReference>
<dbReference type="eggNOG" id="KOG1369">
    <property type="taxonomic scope" value="Eukaryota"/>
</dbReference>
<dbReference type="InParanoid" id="P93834"/>
<dbReference type="OMA" id="EILHDDC"/>
<dbReference type="OrthoDB" id="419537at2759"/>
<dbReference type="PhylomeDB" id="P93834"/>
<dbReference type="BioCyc" id="ARA:AT2G19860-MONOMER"/>
<dbReference type="BioCyc" id="MetaCyc:AT2G19860-MONOMER"/>
<dbReference type="UniPathway" id="UPA00109">
    <property type="reaction ID" value="UER00180"/>
</dbReference>
<dbReference type="UniPathway" id="UPA00242"/>
<dbReference type="PRO" id="PR:P93834"/>
<dbReference type="Proteomes" id="UP000006548">
    <property type="component" value="Chromosome 2"/>
</dbReference>
<dbReference type="ExpressionAtlas" id="P93834">
    <property type="expression patterns" value="baseline and differential"/>
</dbReference>
<dbReference type="GO" id="GO:0005741">
    <property type="term" value="C:mitochondrial outer membrane"/>
    <property type="evidence" value="ECO:0007669"/>
    <property type="project" value="UniProtKB-SubCell"/>
</dbReference>
<dbReference type="GO" id="GO:0005739">
    <property type="term" value="C:mitochondrion"/>
    <property type="evidence" value="ECO:0000314"/>
    <property type="project" value="TAIR"/>
</dbReference>
<dbReference type="GO" id="GO:0005524">
    <property type="term" value="F:ATP binding"/>
    <property type="evidence" value="ECO:0007669"/>
    <property type="project" value="UniProtKB-KW"/>
</dbReference>
<dbReference type="GO" id="GO:0005536">
    <property type="term" value="F:D-glucose binding"/>
    <property type="evidence" value="ECO:0007669"/>
    <property type="project" value="InterPro"/>
</dbReference>
<dbReference type="GO" id="GO:0008865">
    <property type="term" value="F:fructokinase activity"/>
    <property type="evidence" value="ECO:0000314"/>
    <property type="project" value="TAIR"/>
</dbReference>
<dbReference type="GO" id="GO:0004340">
    <property type="term" value="F:glucokinase activity"/>
    <property type="evidence" value="ECO:0000314"/>
    <property type="project" value="TAIR"/>
</dbReference>
<dbReference type="GO" id="GO:0004396">
    <property type="term" value="F:hexokinase activity"/>
    <property type="evidence" value="ECO:0000315"/>
    <property type="project" value="TAIR"/>
</dbReference>
<dbReference type="GO" id="GO:0006096">
    <property type="term" value="P:glycolytic process"/>
    <property type="evidence" value="ECO:0007669"/>
    <property type="project" value="UniProtKB-UniPathway"/>
</dbReference>
<dbReference type="GO" id="GO:0009747">
    <property type="term" value="P:hexokinase-dependent signaling"/>
    <property type="evidence" value="ECO:0000315"/>
    <property type="project" value="TAIR"/>
</dbReference>
<dbReference type="GO" id="GO:0019318">
    <property type="term" value="P:hexose metabolic process"/>
    <property type="evidence" value="ECO:0007669"/>
    <property type="project" value="UniProtKB-UniPathway"/>
</dbReference>
<dbReference type="GO" id="GO:0001678">
    <property type="term" value="P:intracellular glucose homeostasis"/>
    <property type="evidence" value="ECO:0007669"/>
    <property type="project" value="InterPro"/>
</dbReference>
<dbReference type="GO" id="GO:0012501">
    <property type="term" value="P:programmed cell death"/>
    <property type="evidence" value="ECO:0000315"/>
    <property type="project" value="TAIR"/>
</dbReference>
<dbReference type="GO" id="GO:0010182">
    <property type="term" value="P:sugar mediated signaling pathway"/>
    <property type="evidence" value="ECO:0000315"/>
    <property type="project" value="TAIR"/>
</dbReference>
<dbReference type="CDD" id="cd24020">
    <property type="entry name" value="ASKHA_NBD_HK_plant"/>
    <property type="match status" value="1"/>
</dbReference>
<dbReference type="FunFam" id="3.30.420.40:FF:000034">
    <property type="entry name" value="Phosphotransferase"/>
    <property type="match status" value="1"/>
</dbReference>
<dbReference type="FunFam" id="3.40.367.20:FF:000003">
    <property type="entry name" value="Phosphotransferase"/>
    <property type="match status" value="1"/>
</dbReference>
<dbReference type="Gene3D" id="3.30.420.40">
    <property type="match status" value="1"/>
</dbReference>
<dbReference type="Gene3D" id="3.40.367.20">
    <property type="match status" value="1"/>
</dbReference>
<dbReference type="InterPro" id="IPR043129">
    <property type="entry name" value="ATPase_NBD"/>
</dbReference>
<dbReference type="InterPro" id="IPR001312">
    <property type="entry name" value="Hexokinase"/>
</dbReference>
<dbReference type="InterPro" id="IPR019807">
    <property type="entry name" value="Hexokinase_BS"/>
</dbReference>
<dbReference type="InterPro" id="IPR022673">
    <property type="entry name" value="Hexokinase_C"/>
</dbReference>
<dbReference type="InterPro" id="IPR022672">
    <property type="entry name" value="Hexokinase_N"/>
</dbReference>
<dbReference type="PANTHER" id="PTHR19443">
    <property type="entry name" value="HEXOKINASE"/>
    <property type="match status" value="1"/>
</dbReference>
<dbReference type="PANTHER" id="PTHR19443:SF79">
    <property type="entry name" value="HEXOKINASE-2"/>
    <property type="match status" value="1"/>
</dbReference>
<dbReference type="Pfam" id="PF00349">
    <property type="entry name" value="Hexokinase_1"/>
    <property type="match status" value="1"/>
</dbReference>
<dbReference type="Pfam" id="PF03727">
    <property type="entry name" value="Hexokinase_2"/>
    <property type="match status" value="1"/>
</dbReference>
<dbReference type="PRINTS" id="PR00475">
    <property type="entry name" value="HEXOKINASE"/>
</dbReference>
<dbReference type="SUPFAM" id="SSF53067">
    <property type="entry name" value="Actin-like ATPase domain"/>
    <property type="match status" value="2"/>
</dbReference>
<dbReference type="PROSITE" id="PS00378">
    <property type="entry name" value="HEXOKINASE_1"/>
    <property type="match status" value="1"/>
</dbReference>
<dbReference type="PROSITE" id="PS51748">
    <property type="entry name" value="HEXOKINASE_2"/>
    <property type="match status" value="1"/>
</dbReference>
<reference key="1">
    <citation type="journal article" date="1997" name="Plant Cell">
        <title>Hexokinase as a sugar sensor in higher plants.</title>
        <authorList>
            <person name="Jang J.-C."/>
            <person name="Leon P."/>
            <person name="Zhou L."/>
            <person name="Sheen J."/>
        </authorList>
    </citation>
    <scope>NUCLEOTIDE SEQUENCE [MRNA]</scope>
    <scope>FUNCTION</scope>
    <scope>TISSUE SPECIFICITY</scope>
    <scope>DISRUPTION PHENOTYPE</scope>
    <source>
        <strain>cv. Landsberg erecta</strain>
    </source>
</reference>
<reference key="2">
    <citation type="journal article" date="1999" name="Nature">
        <title>Sequence and analysis of chromosome 2 of the plant Arabidopsis thaliana.</title>
        <authorList>
            <person name="Lin X."/>
            <person name="Kaul S."/>
            <person name="Rounsley S.D."/>
            <person name="Shea T.P."/>
            <person name="Benito M.-I."/>
            <person name="Town C.D."/>
            <person name="Fujii C.Y."/>
            <person name="Mason T.M."/>
            <person name="Bowman C.L."/>
            <person name="Barnstead M.E."/>
            <person name="Feldblyum T.V."/>
            <person name="Buell C.R."/>
            <person name="Ketchum K.A."/>
            <person name="Lee J.J."/>
            <person name="Ronning C.M."/>
            <person name="Koo H.L."/>
            <person name="Moffat K.S."/>
            <person name="Cronin L.A."/>
            <person name="Shen M."/>
            <person name="Pai G."/>
            <person name="Van Aken S."/>
            <person name="Umayam L."/>
            <person name="Tallon L.J."/>
            <person name="Gill J.E."/>
            <person name="Adams M.D."/>
            <person name="Carrera A.J."/>
            <person name="Creasy T.H."/>
            <person name="Goodman H.M."/>
            <person name="Somerville C.R."/>
            <person name="Copenhaver G.P."/>
            <person name="Preuss D."/>
            <person name="Nierman W.C."/>
            <person name="White O."/>
            <person name="Eisen J.A."/>
            <person name="Salzberg S.L."/>
            <person name="Fraser C.M."/>
            <person name="Venter J.C."/>
        </authorList>
    </citation>
    <scope>NUCLEOTIDE SEQUENCE [LARGE SCALE GENOMIC DNA]</scope>
    <source>
        <strain>cv. Columbia</strain>
    </source>
</reference>
<reference key="3">
    <citation type="journal article" date="2017" name="Plant J.">
        <title>Araport11: a complete reannotation of the Arabidopsis thaliana reference genome.</title>
        <authorList>
            <person name="Cheng C.Y."/>
            <person name="Krishnakumar V."/>
            <person name="Chan A.P."/>
            <person name="Thibaud-Nissen F."/>
            <person name="Schobel S."/>
            <person name="Town C.D."/>
        </authorList>
    </citation>
    <scope>GENOME REANNOTATION</scope>
    <source>
        <strain>cv. Columbia</strain>
    </source>
</reference>
<reference key="4">
    <citation type="journal article" date="2003" name="Science">
        <title>Empirical analysis of transcriptional activity in the Arabidopsis genome.</title>
        <authorList>
            <person name="Yamada K."/>
            <person name="Lim J."/>
            <person name="Dale J.M."/>
            <person name="Chen H."/>
            <person name="Shinn P."/>
            <person name="Palm C.J."/>
            <person name="Southwick A.M."/>
            <person name="Wu H.C."/>
            <person name="Kim C.J."/>
            <person name="Nguyen M."/>
            <person name="Pham P.K."/>
            <person name="Cheuk R.F."/>
            <person name="Karlin-Newmann G."/>
            <person name="Liu S.X."/>
            <person name="Lam B."/>
            <person name="Sakano H."/>
            <person name="Wu T."/>
            <person name="Yu G."/>
            <person name="Miranda M."/>
            <person name="Quach H.L."/>
            <person name="Tripp M."/>
            <person name="Chang C.H."/>
            <person name="Lee J.M."/>
            <person name="Toriumi M.J."/>
            <person name="Chan M.M."/>
            <person name="Tang C.C."/>
            <person name="Onodera C.S."/>
            <person name="Deng J.M."/>
            <person name="Akiyama K."/>
            <person name="Ansari Y."/>
            <person name="Arakawa T."/>
            <person name="Banh J."/>
            <person name="Banno F."/>
            <person name="Bowser L."/>
            <person name="Brooks S.Y."/>
            <person name="Carninci P."/>
            <person name="Chao Q."/>
            <person name="Choy N."/>
            <person name="Enju A."/>
            <person name="Goldsmith A.D."/>
            <person name="Gurjal M."/>
            <person name="Hansen N.F."/>
            <person name="Hayashizaki Y."/>
            <person name="Johnson-Hopson C."/>
            <person name="Hsuan V.W."/>
            <person name="Iida K."/>
            <person name="Karnes M."/>
            <person name="Khan S."/>
            <person name="Koesema E."/>
            <person name="Ishida J."/>
            <person name="Jiang P.X."/>
            <person name="Jones T."/>
            <person name="Kawai J."/>
            <person name="Kamiya A."/>
            <person name="Meyers C."/>
            <person name="Nakajima M."/>
            <person name="Narusaka M."/>
            <person name="Seki M."/>
            <person name="Sakurai T."/>
            <person name="Satou M."/>
            <person name="Tamse R."/>
            <person name="Vaysberg M."/>
            <person name="Wallender E.K."/>
            <person name="Wong C."/>
            <person name="Yamamura Y."/>
            <person name="Yuan S."/>
            <person name="Shinozaki K."/>
            <person name="Davis R.W."/>
            <person name="Theologis A."/>
            <person name="Ecker J.R."/>
        </authorList>
    </citation>
    <scope>NUCLEOTIDE SEQUENCE [LARGE SCALE MRNA]</scope>
    <source>
        <strain>cv. Columbia</strain>
    </source>
</reference>
<reference key="5">
    <citation type="submission" date="2006-07" db="EMBL/GenBank/DDBJ databases">
        <title>Large-scale analysis of RIKEN Arabidopsis full-length (RAFL) cDNAs.</title>
        <authorList>
            <person name="Totoki Y."/>
            <person name="Seki M."/>
            <person name="Ishida J."/>
            <person name="Nakajima M."/>
            <person name="Enju A."/>
            <person name="Kamiya A."/>
            <person name="Narusaka M."/>
            <person name="Shin-i T."/>
            <person name="Nakagawa M."/>
            <person name="Sakamoto N."/>
            <person name="Oishi K."/>
            <person name="Kohara Y."/>
            <person name="Kobayashi M."/>
            <person name="Toyoda A."/>
            <person name="Sakaki Y."/>
            <person name="Sakurai T."/>
            <person name="Iida K."/>
            <person name="Akiyama K."/>
            <person name="Satou M."/>
            <person name="Toyoda T."/>
            <person name="Konagaya A."/>
            <person name="Carninci P."/>
            <person name="Kawai J."/>
            <person name="Hayashizaki Y."/>
            <person name="Shinozaki K."/>
        </authorList>
    </citation>
    <scope>NUCLEOTIDE SEQUENCE [LARGE SCALE MRNA]</scope>
    <source>
        <strain>cv. Columbia</strain>
    </source>
</reference>
<reference key="6">
    <citation type="journal article" date="2003" name="Plant Cell">
        <title>Enzymes of glycolysis are functionally associated with the mitochondrion in Arabidopsis cells.</title>
        <authorList>
            <person name="Giege P."/>
            <person name="Heazlewood J.L."/>
            <person name="Roessner-Tunali U."/>
            <person name="Millar A.H."/>
            <person name="Fernie A.R."/>
            <person name="Leaver C.J."/>
            <person name="Sweetlove L.J."/>
        </authorList>
    </citation>
    <scope>IDENTIFICATION BY MASS SPECTROMETRY</scope>
    <scope>SUBCELLULAR LOCATION [LARGE SCALE ANALYSIS]</scope>
</reference>
<reference key="7">
    <citation type="journal article" date="2004" name="Plant Cell">
        <title>Experimental analysis of the Arabidopsis mitochondrial proteome highlights signaling and regulatory components, provides assessment of targeting prediction programs, and indicates plant-specific mitochondrial proteins.</title>
        <authorList>
            <person name="Heazlewood J.L."/>
            <person name="Tonti-Filippini J.S."/>
            <person name="Gout A.M."/>
            <person name="Day D.A."/>
            <person name="Whelan J."/>
            <person name="Millar A.H."/>
        </authorList>
    </citation>
    <scope>IDENTIFICATION BY MASS SPECTROMETRY</scope>
    <scope>SUBCELLULAR LOCATION [LARGE SCALE ANALYSIS]</scope>
    <source>
        <strain>cv. Landsberg erecta</strain>
    </source>
</reference>
<reference key="8">
    <citation type="journal article" date="2006" name="Plant Cell">
        <title>Mitochondria-associated hexokinases play a role in the control of programmed cell death in Nicotiana benthamiana.</title>
        <authorList>
            <person name="Kim M."/>
            <person name="Lim J.-H."/>
            <person name="Ahn C.S."/>
            <person name="Park K."/>
            <person name="Kim G.T."/>
            <person name="Kim W.T."/>
            <person name="Pai H.-S."/>
        </authorList>
    </citation>
    <scope>FUNCTION</scope>
</reference>
<comment type="function">
    <text evidence="6 7">Fructose and glucose phosphorylating enzyme (PubMed:9014361). May be involved in the phosphorylation of glucose during the export from mitochondrion to cytosol (PubMed:9014361). Acts as a sugar sensor which may regulate sugar-dependent gene repression or activation (PubMed:9014361). Mediates the effects of sugar on plant growth and development independently of its catalytic activity or the sugar metabolism (PubMed:9014361). May regulate the execution of program cell death in plant cells (PubMed:16920781).</text>
</comment>
<comment type="catalytic activity">
    <reaction evidence="9">
        <text>a D-hexose + ATP = a D-hexose 6-phosphate + ADP + H(+)</text>
        <dbReference type="Rhea" id="RHEA:22740"/>
        <dbReference type="ChEBI" id="CHEBI:4194"/>
        <dbReference type="ChEBI" id="CHEBI:15378"/>
        <dbReference type="ChEBI" id="CHEBI:30616"/>
        <dbReference type="ChEBI" id="CHEBI:229467"/>
        <dbReference type="ChEBI" id="CHEBI:456216"/>
        <dbReference type="EC" id="2.7.1.1"/>
    </reaction>
</comment>
<comment type="catalytic activity">
    <reaction evidence="9">
        <text>D-fructose + ATP = D-fructose 6-phosphate + ADP + H(+)</text>
        <dbReference type="Rhea" id="RHEA:16125"/>
        <dbReference type="ChEBI" id="CHEBI:15378"/>
        <dbReference type="ChEBI" id="CHEBI:30616"/>
        <dbReference type="ChEBI" id="CHEBI:37721"/>
        <dbReference type="ChEBI" id="CHEBI:61527"/>
        <dbReference type="ChEBI" id="CHEBI:456216"/>
        <dbReference type="EC" id="2.7.1.1"/>
    </reaction>
</comment>
<comment type="catalytic activity">
    <reaction evidence="9">
        <text>D-glucose + ATP = D-glucose 6-phosphate + ADP + H(+)</text>
        <dbReference type="Rhea" id="RHEA:17825"/>
        <dbReference type="ChEBI" id="CHEBI:4167"/>
        <dbReference type="ChEBI" id="CHEBI:15378"/>
        <dbReference type="ChEBI" id="CHEBI:30616"/>
        <dbReference type="ChEBI" id="CHEBI:61548"/>
        <dbReference type="ChEBI" id="CHEBI:456216"/>
        <dbReference type="EC" id="2.7.1.1"/>
    </reaction>
</comment>
<comment type="pathway">
    <text evidence="9">Carbohydrate metabolism; hexose metabolism.</text>
</comment>
<comment type="pathway">
    <text evidence="9">Carbohydrate degradation; glycolysis; D-glyceraldehyde 3-phosphate and glycerone phosphate from D-glucose: step 1/4.</text>
</comment>
<comment type="subcellular location">
    <subcellularLocation>
        <location evidence="4 5">Mitochondrion outer membrane</location>
        <topology evidence="4 5">Single-pass membrane protein</topology>
    </subcellularLocation>
</comment>
<comment type="alternative products">
    <event type="alternative splicing"/>
    <isoform>
        <id>P93834-1</id>
        <name>1</name>
        <sequence type="displayed"/>
    </isoform>
    <text>A number of isoforms are produced. According to EST sequences.</text>
</comment>
<comment type="tissue specificity">
    <text evidence="7">Highly expressed in siliques, at intermediate levels in roots and flowers, and at lower levels in stems, rosette and cauline leaves.</text>
</comment>
<comment type="disruption phenotype">
    <text evidence="7">Plants are overall smaller with a reduced number of flowers and siliques and display a glucose-insensitive phenotype which allows them to grow on high glucose concentration medium (&gt;6% glucose).</text>
</comment>
<comment type="similarity">
    <text evidence="3 8">Belongs to the hexokinase family.</text>
</comment>
<feature type="chain" id="PRO_0000197613" description="Hexokinase-2">
    <location>
        <begin position="1"/>
        <end position="502"/>
    </location>
</feature>
<feature type="transmembrane region" description="Helical" evidence="2">
    <location>
        <begin position="4"/>
        <end position="24"/>
    </location>
</feature>
<feature type="domain" description="Hexokinase" evidence="3">
    <location>
        <begin position="35"/>
        <end position="487"/>
    </location>
</feature>
<feature type="region of interest" description="Hexokinase small subdomain" evidence="3">
    <location>
        <begin position="90"/>
        <end position="228"/>
    </location>
</feature>
<feature type="region of interest" description="Hexokinase large subdomain" evidence="3">
    <location>
        <begin position="229"/>
        <end position="476"/>
    </location>
</feature>
<feature type="binding site" evidence="1">
    <location>
        <position position="104"/>
    </location>
    <ligand>
        <name>ADP</name>
        <dbReference type="ChEBI" id="CHEBI:456216"/>
    </ligand>
</feature>
<feature type="binding site" evidence="1">
    <location>
        <position position="105"/>
    </location>
    <ligand>
        <name>ADP</name>
        <dbReference type="ChEBI" id="CHEBI:456216"/>
    </ligand>
</feature>
<feature type="binding site" evidence="1">
    <location>
        <position position="106"/>
    </location>
    <ligand>
        <name>ADP</name>
        <dbReference type="ChEBI" id="CHEBI:456216"/>
    </ligand>
</feature>
<feature type="binding site" evidence="1">
    <location>
        <position position="194"/>
    </location>
    <ligand>
        <name>D-glucose</name>
        <dbReference type="ChEBI" id="CHEBI:4167"/>
    </ligand>
</feature>
<feature type="binding site" evidence="1">
    <location>
        <position position="195"/>
    </location>
    <ligand>
        <name>D-glucose</name>
        <dbReference type="ChEBI" id="CHEBI:4167"/>
    </ligand>
</feature>
<feature type="binding site" evidence="1">
    <location>
        <position position="229"/>
    </location>
    <ligand>
        <name>D-glucose</name>
        <dbReference type="ChEBI" id="CHEBI:4167"/>
    </ligand>
</feature>
<feature type="binding site" evidence="1">
    <location>
        <position position="230"/>
    </location>
    <ligand>
        <name>D-glucose</name>
        <dbReference type="ChEBI" id="CHEBI:4167"/>
    </ligand>
</feature>
<feature type="binding site" evidence="1">
    <location>
        <position position="253"/>
    </location>
    <ligand>
        <name>ADP</name>
        <dbReference type="ChEBI" id="CHEBI:456216"/>
    </ligand>
</feature>
<feature type="binding site" evidence="1">
    <location>
        <position position="256"/>
    </location>
    <ligand>
        <name>D-glucose</name>
        <dbReference type="ChEBI" id="CHEBI:4167"/>
    </ligand>
</feature>
<feature type="binding site" evidence="1">
    <location>
        <position position="284"/>
    </location>
    <ligand>
        <name>D-glucose</name>
        <dbReference type="ChEBI" id="CHEBI:4167"/>
    </ligand>
</feature>
<feature type="binding site" evidence="1">
    <location>
        <position position="315"/>
    </location>
    <ligand>
        <name>D-glucose</name>
        <dbReference type="ChEBI" id="CHEBI:4167"/>
    </ligand>
</feature>
<feature type="binding site" evidence="1">
    <location>
        <position position="441"/>
    </location>
    <ligand>
        <name>ADP</name>
        <dbReference type="ChEBI" id="CHEBI:456216"/>
    </ligand>
</feature>
<feature type="sequence conflict" description="In Ref. 4; AAO24584 and 5; BAE99655." evidence="8" ref="4 5">
    <original>N</original>
    <variation>S</variation>
    <location>
        <position position="242"/>
    </location>
</feature>
<gene>
    <name type="primary">HXK2</name>
    <name type="ordered locus">At2g19860</name>
    <name type="ORF">F6F22.11</name>
</gene>
<accession>P93834</accession>
<accession>Q0WT93</accession>
<accession>Q84WJ5</accession>
<keyword id="KW-0025">Alternative splicing</keyword>
<keyword id="KW-0067">ATP-binding</keyword>
<keyword id="KW-0324">Glycolysis</keyword>
<keyword id="KW-0418">Kinase</keyword>
<keyword id="KW-0472">Membrane</keyword>
<keyword id="KW-0496">Mitochondrion</keyword>
<keyword id="KW-1000">Mitochondrion outer membrane</keyword>
<keyword id="KW-0547">Nucleotide-binding</keyword>
<keyword id="KW-1185">Reference proteome</keyword>
<keyword id="KW-0808">Transferase</keyword>
<keyword id="KW-0812">Transmembrane</keyword>
<keyword id="KW-1133">Transmembrane helix</keyword>
<evidence type="ECO:0000250" key="1">
    <source>
        <dbReference type="UniProtKB" id="Q8LQ68"/>
    </source>
</evidence>
<evidence type="ECO:0000255" key="2"/>
<evidence type="ECO:0000255" key="3">
    <source>
        <dbReference type="PROSITE-ProRule" id="PRU01084"/>
    </source>
</evidence>
<evidence type="ECO:0000269" key="4">
    <source>
    </source>
</evidence>
<evidence type="ECO:0000269" key="5">
    <source>
    </source>
</evidence>
<evidence type="ECO:0000269" key="6">
    <source>
    </source>
</evidence>
<evidence type="ECO:0000269" key="7">
    <source>
    </source>
</evidence>
<evidence type="ECO:0000305" key="8"/>
<evidence type="ECO:0000305" key="9">
    <source>
    </source>
</evidence>
<organism>
    <name type="scientific">Arabidopsis thaliana</name>
    <name type="common">Mouse-ear cress</name>
    <dbReference type="NCBI Taxonomy" id="3702"/>
    <lineage>
        <taxon>Eukaryota</taxon>
        <taxon>Viridiplantae</taxon>
        <taxon>Streptophyta</taxon>
        <taxon>Embryophyta</taxon>
        <taxon>Tracheophyta</taxon>
        <taxon>Spermatophyta</taxon>
        <taxon>Magnoliopsida</taxon>
        <taxon>eudicotyledons</taxon>
        <taxon>Gunneridae</taxon>
        <taxon>Pentapetalae</taxon>
        <taxon>rosids</taxon>
        <taxon>malvids</taxon>
        <taxon>Brassicales</taxon>
        <taxon>Brassicaceae</taxon>
        <taxon>Camelineae</taxon>
        <taxon>Arabidopsis</taxon>
    </lineage>
</organism>